<name>SUCC_SHEB2</name>
<gene>
    <name evidence="1" type="primary">sucC</name>
    <name type="ordered locus">Sbal223_1838</name>
</gene>
<accession>B8E770</accession>
<protein>
    <recommendedName>
        <fullName evidence="1">Succinate--CoA ligase [ADP-forming] subunit beta</fullName>
        <ecNumber evidence="1">6.2.1.5</ecNumber>
    </recommendedName>
    <alternativeName>
        <fullName evidence="1">Succinyl-CoA synthetase subunit beta</fullName>
        <shortName evidence="1">SCS-beta</shortName>
    </alternativeName>
</protein>
<sequence>MNLHEYQAKSLFAEYGLPVSEGFACDTAQEAVEAAGHIGGNLWVVKCQVHAGGRGKAGGVKVTGDKEEIRAFAEHWLGKNLVTYQTDEKGQPVAKILVESCTDIANELYLGAVVDRATRRVVFMASTEGGVEIEKVAEETPELIHTAIIDPLTGPQGYQARDLGFKLGLNPTQMKQFTKIFMGLATMFVDHDFALLEINPLVITTEGNLHCLDGKIGIDGNALYRQPKIKGMHDPSQDDAREAHAAKFELNYVALDGNVGCMVNGAGLAMGTMDIVNLHGGKPANFLDVGGGATKERVAEAFKIILSDSNVKAVLVNIFGGIVRCDMIAEGIIGAVKEVGVKVPVVVRLEGTNAELGREVLAKSGLDIIAATSLTDAAEQVVKAAEGK</sequence>
<keyword id="KW-0067">ATP-binding</keyword>
<keyword id="KW-0436">Ligase</keyword>
<keyword id="KW-0460">Magnesium</keyword>
<keyword id="KW-0479">Metal-binding</keyword>
<keyword id="KW-0547">Nucleotide-binding</keyword>
<keyword id="KW-0816">Tricarboxylic acid cycle</keyword>
<reference key="1">
    <citation type="submission" date="2008-12" db="EMBL/GenBank/DDBJ databases">
        <title>Complete sequence of chromosome of Shewanella baltica OS223.</title>
        <authorList>
            <consortium name="US DOE Joint Genome Institute"/>
            <person name="Lucas S."/>
            <person name="Copeland A."/>
            <person name="Lapidus A."/>
            <person name="Glavina del Rio T."/>
            <person name="Dalin E."/>
            <person name="Tice H."/>
            <person name="Bruce D."/>
            <person name="Goodwin L."/>
            <person name="Pitluck S."/>
            <person name="Chertkov O."/>
            <person name="Meincke L."/>
            <person name="Brettin T."/>
            <person name="Detter J.C."/>
            <person name="Han C."/>
            <person name="Kuske C.R."/>
            <person name="Larimer F."/>
            <person name="Land M."/>
            <person name="Hauser L."/>
            <person name="Kyrpides N."/>
            <person name="Ovchinnikova G."/>
            <person name="Brettar I."/>
            <person name="Rodrigues J."/>
            <person name="Konstantinidis K."/>
            <person name="Tiedje J."/>
        </authorList>
    </citation>
    <scope>NUCLEOTIDE SEQUENCE [LARGE SCALE GENOMIC DNA]</scope>
    <source>
        <strain>OS223</strain>
    </source>
</reference>
<feature type="chain" id="PRO_1000197715" description="Succinate--CoA ligase [ADP-forming] subunit beta">
    <location>
        <begin position="1"/>
        <end position="388"/>
    </location>
</feature>
<feature type="domain" description="ATP-grasp" evidence="1">
    <location>
        <begin position="9"/>
        <end position="244"/>
    </location>
</feature>
<feature type="binding site" evidence="1">
    <location>
        <position position="46"/>
    </location>
    <ligand>
        <name>ATP</name>
        <dbReference type="ChEBI" id="CHEBI:30616"/>
    </ligand>
</feature>
<feature type="binding site" evidence="1">
    <location>
        <begin position="53"/>
        <end position="55"/>
    </location>
    <ligand>
        <name>ATP</name>
        <dbReference type="ChEBI" id="CHEBI:30616"/>
    </ligand>
</feature>
<feature type="binding site" evidence="1">
    <location>
        <position position="99"/>
    </location>
    <ligand>
        <name>ATP</name>
        <dbReference type="ChEBI" id="CHEBI:30616"/>
    </ligand>
</feature>
<feature type="binding site" evidence="1">
    <location>
        <position position="102"/>
    </location>
    <ligand>
        <name>ATP</name>
        <dbReference type="ChEBI" id="CHEBI:30616"/>
    </ligand>
</feature>
<feature type="binding site" evidence="1">
    <location>
        <position position="107"/>
    </location>
    <ligand>
        <name>ATP</name>
        <dbReference type="ChEBI" id="CHEBI:30616"/>
    </ligand>
</feature>
<feature type="binding site" evidence="1">
    <location>
        <position position="199"/>
    </location>
    <ligand>
        <name>Mg(2+)</name>
        <dbReference type="ChEBI" id="CHEBI:18420"/>
    </ligand>
</feature>
<feature type="binding site" evidence="1">
    <location>
        <position position="213"/>
    </location>
    <ligand>
        <name>Mg(2+)</name>
        <dbReference type="ChEBI" id="CHEBI:18420"/>
    </ligand>
</feature>
<feature type="binding site" evidence="1">
    <location>
        <position position="264"/>
    </location>
    <ligand>
        <name>substrate</name>
        <note>ligand shared with subunit alpha</note>
    </ligand>
</feature>
<feature type="binding site" evidence="1">
    <location>
        <begin position="321"/>
        <end position="323"/>
    </location>
    <ligand>
        <name>substrate</name>
        <note>ligand shared with subunit alpha</note>
    </ligand>
</feature>
<evidence type="ECO:0000255" key="1">
    <source>
        <dbReference type="HAMAP-Rule" id="MF_00558"/>
    </source>
</evidence>
<comment type="function">
    <text evidence="1">Succinyl-CoA synthetase functions in the citric acid cycle (TCA), coupling the hydrolysis of succinyl-CoA to the synthesis of either ATP or GTP and thus represents the only step of substrate-level phosphorylation in the TCA. The beta subunit provides nucleotide specificity of the enzyme and binds the substrate succinate, while the binding sites for coenzyme A and phosphate are found in the alpha subunit.</text>
</comment>
<comment type="catalytic activity">
    <reaction evidence="1">
        <text>succinate + ATP + CoA = succinyl-CoA + ADP + phosphate</text>
        <dbReference type="Rhea" id="RHEA:17661"/>
        <dbReference type="ChEBI" id="CHEBI:30031"/>
        <dbReference type="ChEBI" id="CHEBI:30616"/>
        <dbReference type="ChEBI" id="CHEBI:43474"/>
        <dbReference type="ChEBI" id="CHEBI:57287"/>
        <dbReference type="ChEBI" id="CHEBI:57292"/>
        <dbReference type="ChEBI" id="CHEBI:456216"/>
        <dbReference type="EC" id="6.2.1.5"/>
    </reaction>
    <physiologicalReaction direction="right-to-left" evidence="1">
        <dbReference type="Rhea" id="RHEA:17663"/>
    </physiologicalReaction>
</comment>
<comment type="catalytic activity">
    <reaction evidence="1">
        <text>GTP + succinate + CoA = succinyl-CoA + GDP + phosphate</text>
        <dbReference type="Rhea" id="RHEA:22120"/>
        <dbReference type="ChEBI" id="CHEBI:30031"/>
        <dbReference type="ChEBI" id="CHEBI:37565"/>
        <dbReference type="ChEBI" id="CHEBI:43474"/>
        <dbReference type="ChEBI" id="CHEBI:57287"/>
        <dbReference type="ChEBI" id="CHEBI:57292"/>
        <dbReference type="ChEBI" id="CHEBI:58189"/>
    </reaction>
    <physiologicalReaction direction="right-to-left" evidence="1">
        <dbReference type="Rhea" id="RHEA:22122"/>
    </physiologicalReaction>
</comment>
<comment type="cofactor">
    <cofactor evidence="1">
        <name>Mg(2+)</name>
        <dbReference type="ChEBI" id="CHEBI:18420"/>
    </cofactor>
    <text evidence="1">Binds 1 Mg(2+) ion per subunit.</text>
</comment>
<comment type="pathway">
    <text evidence="1">Carbohydrate metabolism; tricarboxylic acid cycle; succinate from succinyl-CoA (ligase route): step 1/1.</text>
</comment>
<comment type="subunit">
    <text evidence="1">Heterotetramer of two alpha and two beta subunits.</text>
</comment>
<comment type="similarity">
    <text evidence="1">Belongs to the succinate/malate CoA ligase beta subunit family.</text>
</comment>
<dbReference type="EC" id="6.2.1.5" evidence="1"/>
<dbReference type="EMBL" id="CP001252">
    <property type="protein sequence ID" value="ACK46343.1"/>
    <property type="molecule type" value="Genomic_DNA"/>
</dbReference>
<dbReference type="RefSeq" id="WP_006081976.1">
    <property type="nucleotide sequence ID" value="NC_011663.1"/>
</dbReference>
<dbReference type="SMR" id="B8E770"/>
<dbReference type="GeneID" id="11772717"/>
<dbReference type="KEGG" id="sbp:Sbal223_1838"/>
<dbReference type="HOGENOM" id="CLU_037430_0_2_6"/>
<dbReference type="UniPathway" id="UPA00223">
    <property type="reaction ID" value="UER00999"/>
</dbReference>
<dbReference type="Proteomes" id="UP000002507">
    <property type="component" value="Chromosome"/>
</dbReference>
<dbReference type="GO" id="GO:0005829">
    <property type="term" value="C:cytosol"/>
    <property type="evidence" value="ECO:0007669"/>
    <property type="project" value="TreeGrafter"/>
</dbReference>
<dbReference type="GO" id="GO:0042709">
    <property type="term" value="C:succinate-CoA ligase complex"/>
    <property type="evidence" value="ECO:0007669"/>
    <property type="project" value="TreeGrafter"/>
</dbReference>
<dbReference type="GO" id="GO:0005524">
    <property type="term" value="F:ATP binding"/>
    <property type="evidence" value="ECO:0007669"/>
    <property type="project" value="UniProtKB-UniRule"/>
</dbReference>
<dbReference type="GO" id="GO:0000287">
    <property type="term" value="F:magnesium ion binding"/>
    <property type="evidence" value="ECO:0007669"/>
    <property type="project" value="UniProtKB-UniRule"/>
</dbReference>
<dbReference type="GO" id="GO:0004775">
    <property type="term" value="F:succinate-CoA ligase (ADP-forming) activity"/>
    <property type="evidence" value="ECO:0007669"/>
    <property type="project" value="UniProtKB-UniRule"/>
</dbReference>
<dbReference type="GO" id="GO:0004776">
    <property type="term" value="F:succinate-CoA ligase (GDP-forming) activity"/>
    <property type="evidence" value="ECO:0007669"/>
    <property type="project" value="RHEA"/>
</dbReference>
<dbReference type="GO" id="GO:0006104">
    <property type="term" value="P:succinyl-CoA metabolic process"/>
    <property type="evidence" value="ECO:0007669"/>
    <property type="project" value="TreeGrafter"/>
</dbReference>
<dbReference type="GO" id="GO:0006099">
    <property type="term" value="P:tricarboxylic acid cycle"/>
    <property type="evidence" value="ECO:0007669"/>
    <property type="project" value="UniProtKB-UniRule"/>
</dbReference>
<dbReference type="FunFam" id="3.30.1490.20:FF:000002">
    <property type="entry name" value="Succinate--CoA ligase [ADP-forming] subunit beta"/>
    <property type="match status" value="1"/>
</dbReference>
<dbReference type="FunFam" id="3.30.470.20:FF:000002">
    <property type="entry name" value="Succinate--CoA ligase [ADP-forming] subunit beta"/>
    <property type="match status" value="1"/>
</dbReference>
<dbReference type="FunFam" id="3.40.50.261:FF:000001">
    <property type="entry name" value="Succinate--CoA ligase [ADP-forming] subunit beta"/>
    <property type="match status" value="1"/>
</dbReference>
<dbReference type="Gene3D" id="3.30.1490.20">
    <property type="entry name" value="ATP-grasp fold, A domain"/>
    <property type="match status" value="1"/>
</dbReference>
<dbReference type="Gene3D" id="3.30.470.20">
    <property type="entry name" value="ATP-grasp fold, B domain"/>
    <property type="match status" value="1"/>
</dbReference>
<dbReference type="Gene3D" id="3.40.50.261">
    <property type="entry name" value="Succinyl-CoA synthetase domains"/>
    <property type="match status" value="1"/>
</dbReference>
<dbReference type="HAMAP" id="MF_00558">
    <property type="entry name" value="Succ_CoA_beta"/>
    <property type="match status" value="1"/>
</dbReference>
<dbReference type="InterPro" id="IPR011761">
    <property type="entry name" value="ATP-grasp"/>
</dbReference>
<dbReference type="InterPro" id="IPR013650">
    <property type="entry name" value="ATP-grasp_succ-CoA_synth-type"/>
</dbReference>
<dbReference type="InterPro" id="IPR013815">
    <property type="entry name" value="ATP_grasp_subdomain_1"/>
</dbReference>
<dbReference type="InterPro" id="IPR017866">
    <property type="entry name" value="Succ-CoA_synthase_bsu_CS"/>
</dbReference>
<dbReference type="InterPro" id="IPR005811">
    <property type="entry name" value="SUCC_ACL_C"/>
</dbReference>
<dbReference type="InterPro" id="IPR005809">
    <property type="entry name" value="Succ_CoA_ligase-like_bsu"/>
</dbReference>
<dbReference type="InterPro" id="IPR016102">
    <property type="entry name" value="Succinyl-CoA_synth-like"/>
</dbReference>
<dbReference type="NCBIfam" id="NF001913">
    <property type="entry name" value="PRK00696.1"/>
    <property type="match status" value="1"/>
</dbReference>
<dbReference type="NCBIfam" id="TIGR01016">
    <property type="entry name" value="sucCoAbeta"/>
    <property type="match status" value="1"/>
</dbReference>
<dbReference type="PANTHER" id="PTHR11815:SF10">
    <property type="entry name" value="SUCCINATE--COA LIGASE [GDP-FORMING] SUBUNIT BETA, MITOCHONDRIAL"/>
    <property type="match status" value="1"/>
</dbReference>
<dbReference type="PANTHER" id="PTHR11815">
    <property type="entry name" value="SUCCINYL-COA SYNTHETASE BETA CHAIN"/>
    <property type="match status" value="1"/>
</dbReference>
<dbReference type="Pfam" id="PF08442">
    <property type="entry name" value="ATP-grasp_2"/>
    <property type="match status" value="1"/>
</dbReference>
<dbReference type="Pfam" id="PF00549">
    <property type="entry name" value="Ligase_CoA"/>
    <property type="match status" value="1"/>
</dbReference>
<dbReference type="PIRSF" id="PIRSF001554">
    <property type="entry name" value="SucCS_beta"/>
    <property type="match status" value="1"/>
</dbReference>
<dbReference type="SUPFAM" id="SSF56059">
    <property type="entry name" value="Glutathione synthetase ATP-binding domain-like"/>
    <property type="match status" value="1"/>
</dbReference>
<dbReference type="SUPFAM" id="SSF52210">
    <property type="entry name" value="Succinyl-CoA synthetase domains"/>
    <property type="match status" value="1"/>
</dbReference>
<dbReference type="PROSITE" id="PS50975">
    <property type="entry name" value="ATP_GRASP"/>
    <property type="match status" value="1"/>
</dbReference>
<dbReference type="PROSITE" id="PS01217">
    <property type="entry name" value="SUCCINYL_COA_LIG_3"/>
    <property type="match status" value="1"/>
</dbReference>
<proteinExistence type="inferred from homology"/>
<organism>
    <name type="scientific">Shewanella baltica (strain OS223)</name>
    <dbReference type="NCBI Taxonomy" id="407976"/>
    <lineage>
        <taxon>Bacteria</taxon>
        <taxon>Pseudomonadati</taxon>
        <taxon>Pseudomonadota</taxon>
        <taxon>Gammaproteobacteria</taxon>
        <taxon>Alteromonadales</taxon>
        <taxon>Shewanellaceae</taxon>
        <taxon>Shewanella</taxon>
    </lineage>
</organism>